<keyword id="KW-0002">3D-structure</keyword>
<keyword id="KW-0158">Chromosome</keyword>
<keyword id="KW-0175">Coiled coil</keyword>
<keyword id="KW-0963">Cytoplasm</keyword>
<keyword id="KW-0225">Disease variant</keyword>
<keyword id="KW-0227">DNA damage</keyword>
<keyword id="KW-0234">DNA repair</keyword>
<keyword id="KW-0242">Dwarfism</keyword>
<keyword id="KW-0991">Intellectual disability</keyword>
<keyword id="KW-1017">Isopeptide bond</keyword>
<keyword id="KW-0479">Metal-binding</keyword>
<keyword id="KW-0539">Nucleus</keyword>
<keyword id="KW-1267">Proteomics identification</keyword>
<keyword id="KW-1185">Reference proteome</keyword>
<keyword id="KW-0677">Repeat</keyword>
<keyword id="KW-0808">Transferase</keyword>
<keyword id="KW-0832">Ubl conjugation</keyword>
<keyword id="KW-0833">Ubl conjugation pathway</keyword>
<keyword id="KW-0862">Zinc</keyword>
<keyword id="KW-0863">Zinc-finger</keyword>
<reference key="1">
    <citation type="journal article" date="1997" name="J. Exp. Med.">
        <title>TRAF-interacting protein (TRIP): a novel component of the tumor necrosis factor receptor (TNFR)- and CD30-TRAF signaling complexes that inhibits TRAF2-mediated NF-kappaB activation.</title>
        <authorList>
            <person name="Lee S.Y."/>
            <person name="Lee S.Y."/>
            <person name="Choi Y."/>
        </authorList>
    </citation>
    <scope>NUCLEOTIDE SEQUENCE [MRNA]</scope>
    <source>
        <tissue>Thymocyte</tissue>
    </source>
</reference>
<reference key="2">
    <citation type="journal article" date="2008" name="Nat. Methods">
        <title>Human protein factory for converting the transcriptome into an in vitro-expressed proteome.</title>
        <authorList>
            <person name="Goshima N."/>
            <person name="Kawamura Y."/>
            <person name="Fukumoto A."/>
            <person name="Miura A."/>
            <person name="Honma R."/>
            <person name="Satoh R."/>
            <person name="Wakamatsu A."/>
            <person name="Yamamoto J."/>
            <person name="Kimura K."/>
            <person name="Nishikawa T."/>
            <person name="Andoh T."/>
            <person name="Iida Y."/>
            <person name="Ishikawa K."/>
            <person name="Ito E."/>
            <person name="Kagawa N."/>
            <person name="Kaminaga C."/>
            <person name="Kanehori K."/>
            <person name="Kawakami B."/>
            <person name="Kenmochi K."/>
            <person name="Kimura R."/>
            <person name="Kobayashi M."/>
            <person name="Kuroita T."/>
            <person name="Kuwayama H."/>
            <person name="Maruyama Y."/>
            <person name="Matsuo K."/>
            <person name="Minami K."/>
            <person name="Mitsubori M."/>
            <person name="Mori M."/>
            <person name="Morishita R."/>
            <person name="Murase A."/>
            <person name="Nishikawa A."/>
            <person name="Nishikawa S."/>
            <person name="Okamoto T."/>
            <person name="Sakagami N."/>
            <person name="Sakamoto Y."/>
            <person name="Sasaki Y."/>
            <person name="Seki T."/>
            <person name="Sono S."/>
            <person name="Sugiyama A."/>
            <person name="Sumiya T."/>
            <person name="Takayama T."/>
            <person name="Takayama Y."/>
            <person name="Takeda H."/>
            <person name="Togashi T."/>
            <person name="Yahata K."/>
            <person name="Yamada H."/>
            <person name="Yanagisawa Y."/>
            <person name="Endo Y."/>
            <person name="Imamoto F."/>
            <person name="Kisu Y."/>
            <person name="Tanaka S."/>
            <person name="Isogai T."/>
            <person name="Imai J."/>
            <person name="Watanabe S."/>
            <person name="Nomura N."/>
        </authorList>
    </citation>
    <scope>NUCLEOTIDE SEQUENCE [LARGE SCALE MRNA]</scope>
</reference>
<reference key="3">
    <citation type="journal article" date="2004" name="Genome Res.">
        <title>The status, quality, and expansion of the NIH full-length cDNA project: the Mammalian Gene Collection (MGC).</title>
        <authorList>
            <consortium name="The MGC Project Team"/>
        </authorList>
    </citation>
    <scope>NUCLEOTIDE SEQUENCE [LARGE SCALE MRNA]</scope>
    <source>
        <tissue>Lung</tissue>
    </source>
</reference>
<reference key="4">
    <citation type="journal article" date="2003" name="J. Exp. Med.">
        <title>The tumor suppressor CYLD interacts with TRIP and regulates negatively nuclear factor kappaB activation by tumor necrosis factor.</title>
        <authorList>
            <person name="Regamey A."/>
            <person name="Hohl D."/>
            <person name="Liu J.W."/>
            <person name="Roger T."/>
            <person name="Kogerman P."/>
            <person name="Toftgaard R."/>
            <person name="Huber M."/>
        </authorList>
    </citation>
    <scope>SUBCELLULAR LOCATION</scope>
    <scope>INTERACTION WITH CYLD</scope>
</reference>
<reference key="5">
    <citation type="journal article" date="2007" name="Biochem. Biophys. Res. Commun.">
        <title>TRAF-interacting protein (TRIP) is a RING-dependent ubiquitin ligase.</title>
        <authorList>
            <person name="Besse A."/>
            <person name="Campos A.D."/>
            <person name="Webster W.K."/>
            <person name="Darnay B.G."/>
        </authorList>
    </citation>
    <scope>FUNCTION</scope>
    <scope>CATALYTIC ACTIVITY</scope>
    <scope>INTERACTION WITH TRAF1; TRAF2; TRAF3; TRAF5 AND TRAF6</scope>
    <scope>LACK OF INTERACTION WITH CYLD</scope>
</reference>
<reference key="6">
    <citation type="journal article" date="2012" name="J. Exp. Med.">
        <title>TRAF-interacting protein (TRIP) negatively regulates IFN-beta production and antiviral response by promoting proteasomal degradation of TANK-binding kinase 1.</title>
        <authorList>
            <person name="Zhang M."/>
            <person name="Wang L."/>
            <person name="Zhao X."/>
            <person name="Zhao K."/>
            <person name="Meng H."/>
            <person name="Zhao W."/>
            <person name="Gao C."/>
        </authorList>
    </citation>
    <scope>FUNCTION</scope>
</reference>
<reference key="7">
    <citation type="journal article" date="2014" name="Development">
        <title>TRIP/NOPO E3 ubiquitin ligase promotes ubiquitylation of DNA polymerase eta.</title>
        <authorList>
            <person name="Wallace H.A."/>
            <person name="Merkle J.A."/>
            <person name="Yu M.C."/>
            <person name="Berg T.G."/>
            <person name="Lee E."/>
            <person name="Bosco G."/>
            <person name="Lee L.A."/>
        </authorList>
    </citation>
    <scope>FUNCTION</scope>
    <scope>SUBCELLULAR LOCATION</scope>
    <scope>INTERACTION WITH POLK AND POLN</scope>
</reference>
<reference key="8">
    <citation type="journal article" date="2014" name="J. Cell Sci.">
        <title>TRAIP is a regulator of the spindle assembly checkpoint.</title>
        <authorList>
            <person name="Chapard C."/>
            <person name="Meraldi P."/>
            <person name="Gleich T."/>
            <person name="Bachmann D."/>
            <person name="Hohl D."/>
            <person name="Huber M."/>
        </authorList>
    </citation>
    <scope>FUNCTION</scope>
    <scope>SUBCELLULAR LOCATION</scope>
    <scope>MUTAGENESIS OF CYS-25</scope>
</reference>
<reference key="9">
    <citation type="journal article" date="2016" name="Biochem. Biophys. Res. Commun.">
        <title>SUMOylation regulates nuclear localization and stability of TRAIP/RNF206.</title>
        <authorList>
            <person name="Park I.S."/>
            <person name="Han Y.G."/>
            <person name="Chung H.J."/>
            <person name="Jung Y.W."/>
            <person name="Kim Y."/>
            <person name="Kim H."/>
        </authorList>
    </citation>
    <scope>SUMOYLATION</scope>
    <scope>SUBCELLULAR LOCATION</scope>
    <scope>MUTAGENESIS OF LYS-80; LYS-127; LYS-205; LYS-247 AND LYS-462</scope>
</reference>
<reference key="10">
    <citation type="journal article" date="2016" name="Nat. Commun.">
        <title>TRAIP/RNF206 is required for recruitment of RAP80 to sites of DNA damage.</title>
        <authorList>
            <person name="Soo Lee N."/>
            <person name="Jin Chung H."/>
            <person name="Kim H.J."/>
            <person name="Yun Lee S."/>
            <person name="Ji J.H."/>
            <person name="Seo Y."/>
            <person name="Hun Han S."/>
            <person name="Choi M."/>
            <person name="Yun M."/>
            <person name="Lee S.G."/>
            <person name="Myung K."/>
            <person name="Kim Y."/>
            <person name="Chul Kang H."/>
            <person name="Kim H."/>
        </authorList>
    </citation>
    <scope>FUNCTION</scope>
    <scope>SUBCELLULAR LOCATION</scope>
    <scope>INTERACTION WITH UIMC1</scope>
</reference>
<reference key="11">
    <citation type="journal article" date="2016" name="Cell Discov.">
        <title>TRAIP regulates replication fork recovery and progression via PCNA.</title>
        <authorList>
            <person name="Feng W."/>
            <person name="Guo Y."/>
            <person name="Huang J."/>
            <person name="Deng Y."/>
            <person name="Zang J."/>
            <person name="Huen M.S."/>
        </authorList>
    </citation>
    <scope>FUNCTION</scope>
    <scope>INTERACTION WITH PCNA</scope>
    <scope>SUBCELLULAR LOCATION</scope>
    <scope>MUTAGENESIS OF CYS-7 AND 460-GLN--LEU-463</scope>
</reference>
<reference key="12">
    <citation type="journal article" date="2016" name="Nat. Genet.">
        <title>TRAIP promotes DNA damage response during genome replication and is mutated in primordial dwarfism.</title>
        <authorList>
            <person name="Harley M.E."/>
            <person name="Murina O."/>
            <person name="Leitch A."/>
            <person name="Higgs M.R."/>
            <person name="Bicknell L.S."/>
            <person name="Yigit G."/>
            <person name="Blackford A.N."/>
            <person name="Zlatanou A."/>
            <person name="Mackenzie K.J."/>
            <person name="Reddy K."/>
            <person name="Halachev M."/>
            <person name="McGlasson S."/>
            <person name="Reijns M.A."/>
            <person name="Fluteau A."/>
            <person name="Martin C.A."/>
            <person name="Sabbioneda S."/>
            <person name="Elcioglu N.H."/>
            <person name="Altmueller J."/>
            <person name="Thiele H."/>
            <person name="Greenhalgh L."/>
            <person name="Chessa L."/>
            <person name="Maghnie M."/>
            <person name="Salim M."/>
            <person name="Bober M.B."/>
            <person name="Nuernberg P."/>
            <person name="Jackson S.P."/>
            <person name="Hurles M.E."/>
            <person name="Wollnik B."/>
            <person name="Stewart G.S."/>
            <person name="Jackson A.P."/>
        </authorList>
    </citation>
    <scope>INVOLVEMENT IN SCKL9</scope>
    <scope>VARIANT SCKL9 CYS-18</scope>
    <scope>FUNCTION</scope>
    <scope>SUBCELLULAR LOCATION</scope>
</reference>
<reference key="13">
    <citation type="journal article" date="2017" name="Nat. Struct. Mol. Biol.">
        <title>Site-specific mapping of the human SUMO proteome reveals co-modification with phosphorylation.</title>
        <authorList>
            <person name="Hendriks I.A."/>
            <person name="Lyon D."/>
            <person name="Young C."/>
            <person name="Jensen L.J."/>
            <person name="Vertegaal A.C."/>
            <person name="Nielsen M.L."/>
        </authorList>
    </citation>
    <scope>SUMOYLATION [LARGE SCALE ANALYSIS] AT LYS-304</scope>
    <scope>IDENTIFICATION BY MASS SPECTROMETRY [LARGE SCALE ANALYSIS]</scope>
</reference>
<reference key="14">
    <citation type="journal article" date="2018" name="Nucleic Acids Res.">
        <title>Nucleolar residence of the seckel syndrome protein TRAIP is coupled to ribosomal DNA transcription.</title>
        <authorList>
            <person name="Chen Y."/>
            <person name="Li J."/>
            <person name="Cao F."/>
            <person name="Lam J."/>
            <person name="Cheng C.C."/>
            <person name="Yu C.H."/>
            <person name="Huen M.S."/>
        </authorList>
    </citation>
    <scope>SUBCELLULAR LOCATION</scope>
    <scope>MUTAGENESIS OF 460-GLN--LEU-463</scope>
</reference>
<reference key="15">
    <citation type="journal article" date="2019" name="Elife">
        <title>TRAIP drives replisome disassembly and mitotic DNA repair synthesis at sites of incomplete DNA replication.</title>
        <authorList>
            <person name="Sonneville R."/>
            <person name="Bhowmick R."/>
            <person name="Hoffmann S."/>
            <person name="Mailand N."/>
            <person name="Hickson I.D."/>
            <person name="Labib K."/>
        </authorList>
    </citation>
    <scope>FUNCTION</scope>
</reference>
<reference evidence="22" key="16">
    <citation type="journal article" date="2016" name="J. Cell Biol.">
        <title>TRAIP is a PCNA-binding ubiquitin ligase that protects genome stability after replication stress.</title>
        <authorList>
            <person name="Hoffmann S."/>
            <person name="Smedegaard S."/>
            <person name="Nakamura K."/>
            <person name="Mortuza G.B."/>
            <person name="Raschle M."/>
            <person name="Ibanez de Opakua A."/>
            <person name="Oka Y."/>
            <person name="Feng Y."/>
            <person name="Blanco F.J."/>
            <person name="Mann M."/>
            <person name="Montoya G."/>
            <person name="Groth A."/>
            <person name="Bekker-Jensen S."/>
            <person name="Mailand N."/>
        </authorList>
    </citation>
    <scope>X-RAY CRYSTALLOGRAPHY (2.20 ANGSTROMS) OF 459-469 IN COMPLEX WITH PCNA</scope>
    <scope>FUNCTION</scope>
    <scope>SUBCELLULAR LOCATION</scope>
    <scope>INTERACTION WITH PCNA</scope>
    <scope>MUTAGENESIS OF PHE-466</scope>
    <scope>CHARACTERIZATION OF VARIANT SCKL9 CYS-18</scope>
</reference>
<accession>Q9BWF2</accession>
<accession>B5BU84</accession>
<accession>B5BUL3</accession>
<accession>O00467</accession>
<organism>
    <name type="scientific">Homo sapiens</name>
    <name type="common">Human</name>
    <dbReference type="NCBI Taxonomy" id="9606"/>
    <lineage>
        <taxon>Eukaryota</taxon>
        <taxon>Metazoa</taxon>
        <taxon>Chordata</taxon>
        <taxon>Craniata</taxon>
        <taxon>Vertebrata</taxon>
        <taxon>Euteleostomi</taxon>
        <taxon>Mammalia</taxon>
        <taxon>Eutheria</taxon>
        <taxon>Euarchontoglires</taxon>
        <taxon>Primates</taxon>
        <taxon>Haplorrhini</taxon>
        <taxon>Catarrhini</taxon>
        <taxon>Hominidae</taxon>
        <taxon>Homo</taxon>
    </lineage>
</organism>
<proteinExistence type="evidence at protein level"/>
<gene>
    <name evidence="17 21" type="primary">TRAIP</name>
    <name evidence="18 21" type="synonym">RNF206</name>
    <name evidence="19" type="synonym">TRIP</name>
</gene>
<feature type="chain" id="PRO_0000056191" description="E3 ubiquitin-protein ligase TRAIP">
    <location>
        <begin position="1"/>
        <end position="469"/>
    </location>
</feature>
<feature type="zinc finger region" description="RING-type" evidence="4">
    <location>
        <begin position="7"/>
        <end position="50"/>
    </location>
</feature>
<feature type="region of interest" description="Interaction with CYLD" evidence="5">
    <location>
        <begin position="211"/>
        <end position="469"/>
    </location>
</feature>
<feature type="coiled-coil region" evidence="3">
    <location>
        <begin position="70"/>
        <end position="177"/>
    </location>
</feature>
<feature type="coiled-coil region" evidence="3">
    <location>
        <begin position="201"/>
        <end position="280"/>
    </location>
</feature>
<feature type="short sequence motif" description="PIP-box" evidence="11">
    <location>
        <begin position="460"/>
        <end position="469"/>
    </location>
</feature>
<feature type="cross-link" description="Glycyl lysine isopeptide (Lys-Gly) (interchain with G-Cter in SUMO2)" evidence="23">
    <location>
        <position position="304"/>
    </location>
</feature>
<feature type="sequence variant" id="VAR_076530" description="In SCKL9; abolished localization to the nucleolus; dbSNP:rs864622784." evidence="10 11">
    <original>R</original>
    <variation>C</variation>
    <location>
        <position position="18"/>
    </location>
</feature>
<feature type="mutagenesis site" description="Abolished accumulation in nucleolus." evidence="14">
    <original>C</original>
    <variation>A</variation>
    <location>
        <position position="7"/>
    </location>
</feature>
<feature type="mutagenesis site" description="Abolished ability to regulate nuclear envelope breakdown to anaphase." evidence="9">
    <original>C</original>
    <variation>A</variation>
    <location>
        <position position="25"/>
    </location>
</feature>
<feature type="mutagenesis site" description="Abolished sumoylation and localization to the nucleus; when associated with A-127, A-205, A-247 and A-462." evidence="13">
    <original>K</original>
    <variation>A</variation>
    <location>
        <position position="80"/>
    </location>
</feature>
<feature type="mutagenesis site" description="Abolished sumoylation and localization to the nucleus; when associated with A-80, A-205, A-247 and A-462." evidence="13">
    <original>K</original>
    <variation>A</variation>
    <location>
        <position position="127"/>
    </location>
</feature>
<feature type="mutagenesis site" description="Abolished sumoylation and localization to the nucleus; when associated with A-80, A-127, A-247 and A-462." evidence="13">
    <original>K</original>
    <variation>A</variation>
    <location>
        <position position="205"/>
    </location>
</feature>
<feature type="mutagenesis site" description="Abolished sumoylation and localization to the nucleus; when associated with A-80, A-127, A-205 and A-462." evidence="13">
    <original>K</original>
    <variation>A</variation>
    <location>
        <position position="247"/>
    </location>
</feature>
<feature type="mutagenesis site" description="Abolished interaction with PCNA and localization to DNA damage sites." evidence="14 15">
    <original>QAKL</original>
    <variation>AAKA</variation>
    <location>
        <begin position="460"/>
        <end position="463"/>
    </location>
</feature>
<feature type="mutagenesis site" description="Abolished sumoylation and localization to the nucleus; when associated with A-80, A-127, A-205 and A-247." evidence="13">
    <original>K</original>
    <variation>A</variation>
    <location>
        <position position="462"/>
    </location>
</feature>
<feature type="mutagenesis site" description="Abolished interaction with PCNA." evidence="11">
    <original>F</original>
    <variation>A</variation>
    <location>
        <position position="466"/>
    </location>
</feature>
<feature type="sequence conflict" description="In Ref. 1; AAB52993." evidence="20" ref="1">
    <original>W</original>
    <variation>S</variation>
    <location>
        <position position="37"/>
    </location>
</feature>
<feature type="sequence conflict" description="In Ref. 1; AAB52993." evidence="20" ref="1">
    <original>A</original>
    <variation>R</variation>
    <location>
        <position position="76"/>
    </location>
</feature>
<feature type="sequence conflict" description="In Ref. 1; AAB52993." evidence="20" ref="1">
    <original>R</original>
    <variation>G</variation>
    <location>
        <position position="157"/>
    </location>
</feature>
<feature type="sequence conflict" description="In Ref. 1; AAB52993." evidence="20" ref="1">
    <original>R</original>
    <variation>L</variation>
    <location>
        <position position="177"/>
    </location>
</feature>
<feature type="helix" evidence="24">
    <location>
        <begin position="463"/>
        <end position="465"/>
    </location>
</feature>
<sequence>MPIRALCTICSDFFDHSRDVAAIHCGHTFHLQCLIQWFETAPSRTCPQCRIQVGKRTIINKLFFDLAQEEENVLDAEFLKNELDNVRAQLSQKDKEKRDSQVIIDTLRDTLEERNATVVSLQQALGKAEMLCSTLKKQMKYLEQQQDETKQAQEEARRLRSKMKTMEQIELLLQSQRPEVEEMIRDMGVGQSAVEQLAVYCVSLKKEYENLKEARKASGEVADKLRKDLFSSRSKLQTVYSELDQAKLELKSAQKDLQSADKEIMSLKKKLTMLQETLNLPPVASETVDRLVLESPAPVEVNLKLRRPSFRDDIDLNATFDVDTPPARPSSSQHGYYEKLCLEKSHSPIQDVPKKICKGPRKESQLSLGGQSCAGEPDEELVGAFPIFVRNAILGQKQPKRPRSESSCSKDVVRTGFDGLGGRTKFIQPTDTVMIRPLPVKPKTKVKQRVRVKTVPSLFQAKLDTFLWS</sequence>
<name>TRAIP_HUMAN</name>
<dbReference type="EC" id="2.3.2.27" evidence="6 7"/>
<dbReference type="EMBL" id="U77845">
    <property type="protein sequence ID" value="AAB52993.1"/>
    <property type="molecule type" value="mRNA"/>
</dbReference>
<dbReference type="EMBL" id="AB451320">
    <property type="protein sequence ID" value="BAG70134.1"/>
    <property type="molecule type" value="mRNA"/>
</dbReference>
<dbReference type="EMBL" id="AB451449">
    <property type="protein sequence ID" value="BAG70263.1"/>
    <property type="molecule type" value="mRNA"/>
</dbReference>
<dbReference type="EMBL" id="BC000310">
    <property type="protein sequence ID" value="AAH00310.1"/>
    <property type="molecule type" value="mRNA"/>
</dbReference>
<dbReference type="EMBL" id="BC019283">
    <property type="protein sequence ID" value="AAH19283.1"/>
    <property type="molecule type" value="mRNA"/>
</dbReference>
<dbReference type="CCDS" id="CCDS2806.1"/>
<dbReference type="RefSeq" id="NP_005870.2">
    <property type="nucleotide sequence ID" value="NM_005879.2"/>
</dbReference>
<dbReference type="PDB" id="4ZTD">
    <property type="method" value="X-ray"/>
    <property type="resolution" value="2.20 A"/>
    <property type="chains" value="D/E=459-469"/>
</dbReference>
<dbReference type="PDBsum" id="4ZTD"/>
<dbReference type="SMR" id="Q9BWF2"/>
<dbReference type="BioGRID" id="115581">
    <property type="interactions" value="79"/>
</dbReference>
<dbReference type="FunCoup" id="Q9BWF2">
    <property type="interactions" value="1995"/>
</dbReference>
<dbReference type="IntAct" id="Q9BWF2">
    <property type="interactions" value="26"/>
</dbReference>
<dbReference type="STRING" id="9606.ENSP00000328203"/>
<dbReference type="GlyGen" id="Q9BWF2">
    <property type="glycosylation" value="4 sites, 2 N-linked glycans (1 site), 1 O-linked glycan (3 sites)"/>
</dbReference>
<dbReference type="iPTMnet" id="Q9BWF2"/>
<dbReference type="PhosphoSitePlus" id="Q9BWF2"/>
<dbReference type="BioMuta" id="TRAIP"/>
<dbReference type="DMDM" id="30580637"/>
<dbReference type="jPOST" id="Q9BWF2"/>
<dbReference type="MassIVE" id="Q9BWF2"/>
<dbReference type="PaxDb" id="9606-ENSP00000328203"/>
<dbReference type="PeptideAtlas" id="Q9BWF2"/>
<dbReference type="ProteomicsDB" id="79271"/>
<dbReference type="Pumba" id="Q9BWF2"/>
<dbReference type="Antibodypedia" id="30670">
    <property type="antibodies" value="309 antibodies from 31 providers"/>
</dbReference>
<dbReference type="DNASU" id="10293"/>
<dbReference type="Ensembl" id="ENST00000331456.7">
    <property type="protein sequence ID" value="ENSP00000328203.2"/>
    <property type="gene ID" value="ENSG00000183763.9"/>
</dbReference>
<dbReference type="GeneID" id="10293"/>
<dbReference type="KEGG" id="hsa:10293"/>
<dbReference type="MANE-Select" id="ENST00000331456.7">
    <property type="protein sequence ID" value="ENSP00000328203.2"/>
    <property type="RefSeq nucleotide sequence ID" value="NM_005879.3"/>
    <property type="RefSeq protein sequence ID" value="NP_005870.2"/>
</dbReference>
<dbReference type="UCSC" id="uc003cxs.2">
    <property type="organism name" value="human"/>
</dbReference>
<dbReference type="AGR" id="HGNC:30764"/>
<dbReference type="CTD" id="10293"/>
<dbReference type="DisGeNET" id="10293"/>
<dbReference type="GeneCards" id="TRAIP"/>
<dbReference type="HGNC" id="HGNC:30764">
    <property type="gene designation" value="TRAIP"/>
</dbReference>
<dbReference type="HPA" id="ENSG00000183763">
    <property type="expression patterns" value="Low tissue specificity"/>
</dbReference>
<dbReference type="MalaCards" id="TRAIP"/>
<dbReference type="MIM" id="605958">
    <property type="type" value="gene"/>
</dbReference>
<dbReference type="MIM" id="616777">
    <property type="type" value="phenotype"/>
</dbReference>
<dbReference type="neXtProt" id="NX_Q9BWF2"/>
<dbReference type="OpenTargets" id="ENSG00000183763"/>
<dbReference type="Orphanet" id="808">
    <property type="disease" value="Seckel syndrome"/>
</dbReference>
<dbReference type="PharmGKB" id="PA142670705"/>
<dbReference type="VEuPathDB" id="HostDB:ENSG00000183763"/>
<dbReference type="eggNOG" id="KOG0827">
    <property type="taxonomic scope" value="Eukaryota"/>
</dbReference>
<dbReference type="GeneTree" id="ENSGT00390000007696"/>
<dbReference type="InParanoid" id="Q9BWF2"/>
<dbReference type="OMA" id="RSKYIQP"/>
<dbReference type="OrthoDB" id="8062037at2759"/>
<dbReference type="PAN-GO" id="Q9BWF2">
    <property type="GO annotations" value="5 GO annotations based on evolutionary models"/>
</dbReference>
<dbReference type="PhylomeDB" id="Q9BWF2"/>
<dbReference type="TreeFam" id="TF317309"/>
<dbReference type="PathwayCommons" id="Q9BWF2"/>
<dbReference type="Reactome" id="R-HSA-983168">
    <property type="pathway name" value="Antigen processing: Ubiquitination &amp; Proteasome degradation"/>
</dbReference>
<dbReference type="SignaLink" id="Q9BWF2"/>
<dbReference type="SIGNOR" id="Q9BWF2"/>
<dbReference type="UniPathway" id="UPA00143"/>
<dbReference type="BioGRID-ORCS" id="10293">
    <property type="hits" value="589 hits in 1200 CRISPR screens"/>
</dbReference>
<dbReference type="CD-CODE" id="91857CE7">
    <property type="entry name" value="Nucleolus"/>
</dbReference>
<dbReference type="ChiTaRS" id="TRAIP">
    <property type="organism name" value="human"/>
</dbReference>
<dbReference type="EvolutionaryTrace" id="Q9BWF2"/>
<dbReference type="GeneWiki" id="TRAF_interacting_protein"/>
<dbReference type="GenomeRNAi" id="10293"/>
<dbReference type="Pharos" id="Q9BWF2">
    <property type="development level" value="Tbio"/>
</dbReference>
<dbReference type="PRO" id="PR:Q9BWF2"/>
<dbReference type="Proteomes" id="UP000005640">
    <property type="component" value="Chromosome 3"/>
</dbReference>
<dbReference type="RNAct" id="Q9BWF2">
    <property type="molecule type" value="protein"/>
</dbReference>
<dbReference type="Bgee" id="ENSG00000183763">
    <property type="expression patterns" value="Expressed in male germ line stem cell (sensu Vertebrata) in testis and 96 other cell types or tissues"/>
</dbReference>
<dbReference type="ExpressionAtlas" id="Q9BWF2">
    <property type="expression patterns" value="baseline and differential"/>
</dbReference>
<dbReference type="GO" id="GO:0005730">
    <property type="term" value="C:nucleolus"/>
    <property type="evidence" value="ECO:0000314"/>
    <property type="project" value="UniProtKB"/>
</dbReference>
<dbReference type="GO" id="GO:0005654">
    <property type="term" value="C:nucleoplasm"/>
    <property type="evidence" value="ECO:0000314"/>
    <property type="project" value="UniProtKB"/>
</dbReference>
<dbReference type="GO" id="GO:0005634">
    <property type="term" value="C:nucleus"/>
    <property type="evidence" value="ECO:0000318"/>
    <property type="project" value="GO_Central"/>
</dbReference>
<dbReference type="GO" id="GO:0048471">
    <property type="term" value="C:perinuclear region of cytoplasm"/>
    <property type="evidence" value="ECO:0007669"/>
    <property type="project" value="UniProtKB-SubCell"/>
</dbReference>
<dbReference type="GO" id="GO:0090734">
    <property type="term" value="C:site of DNA damage"/>
    <property type="evidence" value="ECO:0000314"/>
    <property type="project" value="UniProtKB"/>
</dbReference>
<dbReference type="GO" id="GO:0042802">
    <property type="term" value="F:identical protein binding"/>
    <property type="evidence" value="ECO:0000353"/>
    <property type="project" value="IntAct"/>
</dbReference>
<dbReference type="GO" id="GO:0061630">
    <property type="term" value="F:ubiquitin protein ligase activity"/>
    <property type="evidence" value="ECO:0000318"/>
    <property type="project" value="GO_Central"/>
</dbReference>
<dbReference type="GO" id="GO:0004842">
    <property type="term" value="F:ubiquitin-protein transferase activity"/>
    <property type="evidence" value="ECO:0000314"/>
    <property type="project" value="UniProtKB"/>
</dbReference>
<dbReference type="GO" id="GO:0008270">
    <property type="term" value="F:zinc ion binding"/>
    <property type="evidence" value="ECO:0007669"/>
    <property type="project" value="UniProtKB-KW"/>
</dbReference>
<dbReference type="GO" id="GO:0006915">
    <property type="term" value="P:apoptotic process"/>
    <property type="evidence" value="ECO:0000304"/>
    <property type="project" value="GO_Central"/>
</dbReference>
<dbReference type="GO" id="GO:0006974">
    <property type="term" value="P:DNA damage response"/>
    <property type="evidence" value="ECO:0000314"/>
    <property type="project" value="UniProtKB"/>
</dbReference>
<dbReference type="GO" id="GO:0032688">
    <property type="term" value="P:negative regulation of interferon-beta production"/>
    <property type="evidence" value="ECO:0007669"/>
    <property type="project" value="Ensembl"/>
</dbReference>
<dbReference type="GO" id="GO:0010804">
    <property type="term" value="P:negative regulation of tumor necrosis factor-mediated signaling pathway"/>
    <property type="evidence" value="ECO:0000314"/>
    <property type="project" value="CACAO"/>
</dbReference>
<dbReference type="GO" id="GO:0016567">
    <property type="term" value="P:protein ubiquitination"/>
    <property type="evidence" value="ECO:0000314"/>
    <property type="project" value="UniProtKB"/>
</dbReference>
<dbReference type="GO" id="GO:0106300">
    <property type="term" value="P:protein-DNA covalent cross-linking repair"/>
    <property type="evidence" value="ECO:0000250"/>
    <property type="project" value="UniProtKB"/>
</dbReference>
<dbReference type="GO" id="GO:0031297">
    <property type="term" value="P:replication fork processing"/>
    <property type="evidence" value="ECO:0000314"/>
    <property type="project" value="UniProtKB"/>
</dbReference>
<dbReference type="GO" id="GO:0007165">
    <property type="term" value="P:signal transduction"/>
    <property type="evidence" value="ECO:0000304"/>
    <property type="project" value="ProtInc"/>
</dbReference>
<dbReference type="CDD" id="cd16480">
    <property type="entry name" value="RING-H2_TRAIP"/>
    <property type="match status" value="1"/>
</dbReference>
<dbReference type="FunFam" id="3.30.40.10:FF:000431">
    <property type="entry name" value="E3 ubiquitin-protein ligase TRAIP"/>
    <property type="match status" value="1"/>
</dbReference>
<dbReference type="Gene3D" id="3.30.40.10">
    <property type="entry name" value="Zinc/RING finger domain, C3HC4 (zinc finger)"/>
    <property type="match status" value="1"/>
</dbReference>
<dbReference type="InterPro" id="IPR052639">
    <property type="entry name" value="TRAIP_ubiq-protein_ligase"/>
</dbReference>
<dbReference type="InterPro" id="IPR001841">
    <property type="entry name" value="Znf_RING"/>
</dbReference>
<dbReference type="InterPro" id="IPR013083">
    <property type="entry name" value="Znf_RING/FYVE/PHD"/>
</dbReference>
<dbReference type="PANTHER" id="PTHR46569:SF1">
    <property type="entry name" value="E3 UBIQUITIN-PROTEIN LIGASE RFWD3-RELATED"/>
    <property type="match status" value="1"/>
</dbReference>
<dbReference type="PANTHER" id="PTHR46569">
    <property type="entry name" value="E3 UBIQUITIN-PROTEIN LIGASE TRAIP"/>
    <property type="match status" value="1"/>
</dbReference>
<dbReference type="Pfam" id="PF13639">
    <property type="entry name" value="zf-RING_2"/>
    <property type="match status" value="1"/>
</dbReference>
<dbReference type="SMART" id="SM00184">
    <property type="entry name" value="RING"/>
    <property type="match status" value="1"/>
</dbReference>
<dbReference type="SUPFAM" id="SSF46579">
    <property type="entry name" value="Prefoldin"/>
    <property type="match status" value="1"/>
</dbReference>
<dbReference type="SUPFAM" id="SSF57850">
    <property type="entry name" value="RING/U-box"/>
    <property type="match status" value="1"/>
</dbReference>
<dbReference type="PROSITE" id="PS50089">
    <property type="entry name" value="ZF_RING_2"/>
    <property type="match status" value="1"/>
</dbReference>
<evidence type="ECO:0000250" key="1">
    <source>
        <dbReference type="UniProtKB" id="Q6NRV0"/>
    </source>
</evidence>
<evidence type="ECO:0000250" key="2">
    <source>
        <dbReference type="UniProtKB" id="Q8VIG6"/>
    </source>
</evidence>
<evidence type="ECO:0000255" key="3"/>
<evidence type="ECO:0000255" key="4">
    <source>
        <dbReference type="PROSITE-ProRule" id="PRU00175"/>
    </source>
</evidence>
<evidence type="ECO:0000269" key="5">
    <source>
    </source>
</evidence>
<evidence type="ECO:0000269" key="6">
    <source>
    </source>
</evidence>
<evidence type="ECO:0000269" key="7">
    <source>
    </source>
</evidence>
<evidence type="ECO:0000269" key="8">
    <source>
    </source>
</evidence>
<evidence type="ECO:0000269" key="9">
    <source>
    </source>
</evidence>
<evidence type="ECO:0000269" key="10">
    <source>
    </source>
</evidence>
<evidence type="ECO:0000269" key="11">
    <source>
    </source>
</evidence>
<evidence type="ECO:0000269" key="12">
    <source>
    </source>
</evidence>
<evidence type="ECO:0000269" key="13">
    <source>
    </source>
</evidence>
<evidence type="ECO:0000269" key="14">
    <source>
    </source>
</evidence>
<evidence type="ECO:0000269" key="15">
    <source>
    </source>
</evidence>
<evidence type="ECO:0000269" key="16">
    <source>
    </source>
</evidence>
<evidence type="ECO:0000303" key="17">
    <source>
    </source>
</evidence>
<evidence type="ECO:0000303" key="18">
    <source>
    </source>
</evidence>
<evidence type="ECO:0000303" key="19">
    <source>
    </source>
</evidence>
<evidence type="ECO:0000305" key="20"/>
<evidence type="ECO:0000312" key="21">
    <source>
        <dbReference type="HGNC" id="HGNC:30764"/>
    </source>
</evidence>
<evidence type="ECO:0007744" key="22">
    <source>
        <dbReference type="PDB" id="4ZTD"/>
    </source>
</evidence>
<evidence type="ECO:0007744" key="23">
    <source>
    </source>
</evidence>
<evidence type="ECO:0007829" key="24">
    <source>
        <dbReference type="PDB" id="4ZTD"/>
    </source>
</evidence>
<protein>
    <recommendedName>
        <fullName evidence="20">E3 ubiquitin-protein ligase TRAIP</fullName>
        <ecNumber evidence="6 7">2.3.2.27</ecNumber>
    </recommendedName>
    <alternativeName>
        <fullName evidence="18">RING finger protein 206</fullName>
    </alternativeName>
    <alternativeName>
        <fullName evidence="17 19">TRAF-interacting protein</fullName>
    </alternativeName>
</protein>
<comment type="function">
    <text evidence="1 7 8 9 10 11 12 14 16">E3 ubiquitin ligase required to protect genome stability in response to replication stress (PubMed:25335891, PubMed:26595769, PubMed:26711499, PubMed:26781088, PubMed:27462463, PubMed:31545170). Acts as a key regulator of interstrand cross-link repair, which takes place when both strands of duplex DNA are covalently tethered together, thereby blocking replication and transcription (By similarity). Controls the choice between the two pathways of replication-coupled interstrand-cross-link repair by mediating ubiquitination of MCM7 subunit of the CMG helicase complex (By similarity). Short ubiquitin chains on MCM7 promote recruitment of DNA glycosylase NEIL3 (By similarity). If the interstrand cross-link cannot be cleaved by NEIL3, the ubiquitin chains continue to grow on MCM7, promoting the unloading of the CMG helicase complex by the VCP/p97 ATPase, enabling the Fanconi anemia DNA repair pathway (By similarity). Only catalyzes ubiquitination of MCM7 when forks converge (By similarity). Also involved in the repair of covalent DNA-protein cross-links (DPCs) during DNA synthesis: promotes ubiquitination of DPCs, leading to their degradation by the proteasome (By similarity). Has also been proposed to play a role in promoting translesion synthesis by mediating the assembly of 'Lys-63'-linked poly-ubiquitin chains on the Y-family polymerase POLN in order to facilitate bypass of DNA lesions and preserve genomic integrity (PubMed:24553286). The function in translesion synthesis is however controversial (PubMed:26595769). Acts as a regulator of the spindle assembly checkpoint (PubMed:25335891). Also acts as a negative regulator of innate immune signaling by inhibiting activation of NF-kappa-B mediated by TNF (PubMed:22945920). Negatively regulates TLR3/4- and RIG-I-mediated IRF3 activation and subsequent IFNB1 production and cellular antiviral response by promoting 'Lys-48'-linked polyubiquitination of TNK1 leading to its proteasomal degradation (PubMed:22945920).</text>
</comment>
<comment type="catalytic activity">
    <reaction evidence="6 7">
        <text>S-ubiquitinyl-[E2 ubiquitin-conjugating enzyme]-L-cysteine + [acceptor protein]-L-lysine = [E2 ubiquitin-conjugating enzyme]-L-cysteine + N(6)-ubiquitinyl-[acceptor protein]-L-lysine.</text>
        <dbReference type="EC" id="2.3.2.27"/>
    </reaction>
</comment>
<comment type="pathway">
    <text evidence="6 7">Protein modification; protein ubiquitination.</text>
</comment>
<comment type="subunit">
    <text evidence="5 6 8 11 12 14">Interacts (via PIP-box) with PCNA (PubMed:26711499, PubMed:27462463). Binds TRAF1, TRAF2, TRAF3, TRAF5 and TRAF6 is part of the receptor-TRAF signaling complex (PubMed:17544371). May interact with CYLD; the C-terminus interacts with CYLD, however the interaction was not detected with the full-length protein (PubMed:14676304). Interacts with POLK and POLN (PubMed:24553286). Interacts with UIMC1 (PubMed:26781088).</text>
</comment>
<comment type="interaction">
    <interactant intactId="EBI-1756205">
        <id>Q9BWF2</id>
    </interactant>
    <interactant intactId="EBI-12150557">
        <id>O15296</id>
        <label>ALOX15B</label>
    </interactant>
    <organismsDiffer>false</organismsDiffer>
    <experiments>3</experiments>
</comment>
<comment type="interaction">
    <interactant intactId="EBI-1756205">
        <id>Q9BWF2</id>
    </interactant>
    <interactant intactId="EBI-741885">
        <id>Q96LK0</id>
        <label>CEP19</label>
    </interactant>
    <organismsDiffer>false</organismsDiffer>
    <experiments>3</experiments>
</comment>
<comment type="interaction">
    <interactant intactId="EBI-1756205">
        <id>Q9BWF2</id>
    </interactant>
    <interactant intactId="EBI-1055254">
        <id>Q8WXH2</id>
        <label>JPH3</label>
    </interactant>
    <organismsDiffer>false</organismsDiffer>
    <experiments>3</experiments>
</comment>
<comment type="interaction">
    <interactant intactId="EBI-1756205">
        <id>Q9BWF2</id>
    </interactant>
    <interactant intactId="EBI-1044504">
        <id>Q9BS40</id>
        <label>LXN</label>
    </interactant>
    <organismsDiffer>false</organismsDiffer>
    <experiments>3</experiments>
</comment>
<comment type="interaction">
    <interactant intactId="EBI-1756205">
        <id>Q9BWF2</id>
    </interactant>
    <interactant intactId="EBI-739717">
        <id>Q15555</id>
        <label>MAPRE2</label>
    </interactant>
    <organismsDiffer>false</organismsDiffer>
    <experiments>10</experiments>
</comment>
<comment type="interaction">
    <interactant intactId="EBI-1756205">
        <id>Q9BWF2</id>
    </interactant>
    <interactant intactId="EBI-726739">
        <id>Q9UPY8</id>
        <label>MAPRE3</label>
    </interactant>
    <organismsDiffer>false</organismsDiffer>
    <experiments>3</experiments>
</comment>
<comment type="interaction">
    <interactant intactId="EBI-1756205">
        <id>Q9BWF2</id>
    </interactant>
    <interactant intactId="EBI-389883">
        <id>P16333</id>
        <label>NCK1</label>
    </interactant>
    <organismsDiffer>false</organismsDiffer>
    <experiments>3</experiments>
</comment>
<comment type="interaction">
    <interactant intactId="EBI-1756205">
        <id>Q9BWF2</id>
    </interactant>
    <interactant intactId="EBI-1055079">
        <id>O15160</id>
        <label>POLR1C</label>
    </interactant>
    <organismsDiffer>false</organismsDiffer>
    <experiments>3</experiments>
</comment>
<comment type="interaction">
    <interactant intactId="EBI-1756205">
        <id>Q9BWF2</id>
    </interactant>
    <interactant intactId="EBI-1756205">
        <id>Q9BWF2</id>
        <label>TRAIP</label>
    </interactant>
    <organismsDiffer>false</organismsDiffer>
    <experiments>3</experiments>
</comment>
<comment type="interaction">
    <interactant intactId="EBI-1756205">
        <id>Q9BWF2</id>
    </interactant>
    <interactant intactId="EBI-473850">
        <id>P61086</id>
        <label>UBE2K</label>
    </interactant>
    <organismsDiffer>false</organismsDiffer>
    <experiments>3</experiments>
</comment>
<comment type="subcellular location">
    <subcellularLocation>
        <location evidence="8 10 13 15">Nucleus</location>
        <location evidence="8 10 13 15">Nucleoplasm</location>
    </subcellularLocation>
    <subcellularLocation>
        <location evidence="5 8 9 14 15">Nucleus</location>
        <location evidence="5 8 9 14 15">Nucleolus</location>
    </subcellularLocation>
    <subcellularLocation>
        <location evidence="9 10 11 12 15">Chromosome</location>
    </subcellularLocation>
    <subcellularLocation>
        <location>Cytoplasm</location>
    </subcellularLocation>
    <subcellularLocation>
        <location evidence="5">Cytoplasm</location>
        <location evidence="5">Perinuclear region</location>
    </subcellularLocation>
    <text evidence="10 11 12">In the nucleus, found in close proximity to PCNA, suggesting localization at replication foci (PubMed:26595769). Localizes to DNA damage sites in response to replication stress (PubMed:26595769, PubMed:26711499, PubMed:26781088).</text>
</comment>
<comment type="PTM">
    <text evidence="13">Sumoylated; sumoylation is required for nuclear localization (PubMed:26820530). Sumoylation increases protein stability, possibly by preventing ubiquitination (PubMed:26820530).</text>
</comment>
<comment type="PTM">
    <text evidence="2">Autoubiquitinated.</text>
</comment>
<comment type="disease" evidence="10 11 15">
    <disease id="DI-04640">
        <name>Seckel syndrome 9</name>
        <acronym>SCKL9</acronym>
        <description>A form of Seckel syndrome, a rare autosomal recessive disorder characterized by proportionate dwarfism of prenatal onset associated with low birth weight, growth retardation, severe microcephaly with a bird-headed like appearance, and intellectual disability.</description>
        <dbReference type="MIM" id="616777"/>
    </disease>
    <text>The disease is caused by variants affecting the gene represented in this entry.</text>
</comment>
<comment type="similarity">
    <text evidence="20">Belongs to the TRAIP family.</text>
</comment>